<evidence type="ECO:0000255" key="1">
    <source>
        <dbReference type="HAMAP-Rule" id="MF_00093"/>
    </source>
</evidence>
<evidence type="ECO:0000256" key="2">
    <source>
        <dbReference type="SAM" id="MobiDB-lite"/>
    </source>
</evidence>
<organism>
    <name type="scientific">Salmonella agona (strain SL483)</name>
    <dbReference type="NCBI Taxonomy" id="454166"/>
    <lineage>
        <taxon>Bacteria</taxon>
        <taxon>Pseudomonadati</taxon>
        <taxon>Pseudomonadota</taxon>
        <taxon>Gammaproteobacteria</taxon>
        <taxon>Enterobacterales</taxon>
        <taxon>Enterobacteriaceae</taxon>
        <taxon>Salmonella</taxon>
    </lineage>
</organism>
<reference key="1">
    <citation type="journal article" date="2011" name="J. Bacteriol.">
        <title>Comparative genomics of 28 Salmonella enterica isolates: evidence for CRISPR-mediated adaptive sublineage evolution.</title>
        <authorList>
            <person name="Fricke W.F."/>
            <person name="Mammel M.K."/>
            <person name="McDermott P.F."/>
            <person name="Tartera C."/>
            <person name="White D.G."/>
            <person name="Leclerc J.E."/>
            <person name="Ravel J."/>
            <person name="Cebula T.A."/>
        </authorList>
    </citation>
    <scope>NUCLEOTIDE SEQUENCE [LARGE SCALE GENOMIC DNA]</scope>
    <source>
        <strain>SL483</strain>
    </source>
</reference>
<accession>B5F4H6</accession>
<keyword id="KW-0963">Cytoplasm</keyword>
<keyword id="KW-0488">Methylation</keyword>
<keyword id="KW-0648">Protein biosynthesis</keyword>
<protein>
    <recommendedName>
        <fullName evidence="1">Peptide chain release factor 1</fullName>
        <shortName evidence="1">RF-1</shortName>
    </recommendedName>
</protein>
<dbReference type="EMBL" id="CP001138">
    <property type="protein sequence ID" value="ACH51313.1"/>
    <property type="molecule type" value="Genomic_DNA"/>
</dbReference>
<dbReference type="RefSeq" id="WP_000804703.1">
    <property type="nucleotide sequence ID" value="NC_011149.1"/>
</dbReference>
<dbReference type="SMR" id="B5F4H6"/>
<dbReference type="KEGG" id="sea:SeAg_B1363"/>
<dbReference type="HOGENOM" id="CLU_036856_0_1_6"/>
<dbReference type="Proteomes" id="UP000008819">
    <property type="component" value="Chromosome"/>
</dbReference>
<dbReference type="GO" id="GO:0005737">
    <property type="term" value="C:cytoplasm"/>
    <property type="evidence" value="ECO:0007669"/>
    <property type="project" value="UniProtKB-SubCell"/>
</dbReference>
<dbReference type="GO" id="GO:0016149">
    <property type="term" value="F:translation release factor activity, codon specific"/>
    <property type="evidence" value="ECO:0007669"/>
    <property type="project" value="UniProtKB-UniRule"/>
</dbReference>
<dbReference type="FunFam" id="3.30.160.20:FF:000004">
    <property type="entry name" value="Peptide chain release factor 1"/>
    <property type="match status" value="1"/>
</dbReference>
<dbReference type="FunFam" id="3.30.70.1660:FF:000002">
    <property type="entry name" value="Peptide chain release factor 1"/>
    <property type="match status" value="1"/>
</dbReference>
<dbReference type="FunFam" id="3.30.70.1660:FF:000004">
    <property type="entry name" value="Peptide chain release factor 1"/>
    <property type="match status" value="1"/>
</dbReference>
<dbReference type="Gene3D" id="3.30.160.20">
    <property type="match status" value="1"/>
</dbReference>
<dbReference type="Gene3D" id="3.30.70.1660">
    <property type="match status" value="2"/>
</dbReference>
<dbReference type="Gene3D" id="6.10.140.1950">
    <property type="match status" value="1"/>
</dbReference>
<dbReference type="HAMAP" id="MF_00093">
    <property type="entry name" value="Rel_fac_1"/>
    <property type="match status" value="1"/>
</dbReference>
<dbReference type="InterPro" id="IPR005139">
    <property type="entry name" value="PCRF"/>
</dbReference>
<dbReference type="InterPro" id="IPR000352">
    <property type="entry name" value="Pep_chain_release_fac_I"/>
</dbReference>
<dbReference type="InterPro" id="IPR045853">
    <property type="entry name" value="Pep_chain_release_fac_I_sf"/>
</dbReference>
<dbReference type="InterPro" id="IPR050057">
    <property type="entry name" value="Prokaryotic/Mito_RF"/>
</dbReference>
<dbReference type="InterPro" id="IPR004373">
    <property type="entry name" value="RF-1"/>
</dbReference>
<dbReference type="NCBIfam" id="TIGR00019">
    <property type="entry name" value="prfA"/>
    <property type="match status" value="1"/>
</dbReference>
<dbReference type="NCBIfam" id="NF001859">
    <property type="entry name" value="PRK00591.1"/>
    <property type="match status" value="1"/>
</dbReference>
<dbReference type="PANTHER" id="PTHR43804">
    <property type="entry name" value="LD18447P"/>
    <property type="match status" value="1"/>
</dbReference>
<dbReference type="PANTHER" id="PTHR43804:SF7">
    <property type="entry name" value="LD18447P"/>
    <property type="match status" value="1"/>
</dbReference>
<dbReference type="Pfam" id="PF03462">
    <property type="entry name" value="PCRF"/>
    <property type="match status" value="1"/>
</dbReference>
<dbReference type="Pfam" id="PF00472">
    <property type="entry name" value="RF-1"/>
    <property type="match status" value="1"/>
</dbReference>
<dbReference type="SMART" id="SM00937">
    <property type="entry name" value="PCRF"/>
    <property type="match status" value="1"/>
</dbReference>
<dbReference type="SUPFAM" id="SSF75620">
    <property type="entry name" value="Release factor"/>
    <property type="match status" value="1"/>
</dbReference>
<dbReference type="PROSITE" id="PS00745">
    <property type="entry name" value="RF_PROK_I"/>
    <property type="match status" value="1"/>
</dbReference>
<feature type="chain" id="PRO_1000093496" description="Peptide chain release factor 1">
    <location>
        <begin position="1"/>
        <end position="360"/>
    </location>
</feature>
<feature type="region of interest" description="Disordered" evidence="2">
    <location>
        <begin position="284"/>
        <end position="313"/>
    </location>
</feature>
<feature type="modified residue" description="N5-methylglutamine" evidence="1">
    <location>
        <position position="235"/>
    </location>
</feature>
<comment type="function">
    <text evidence="1">Peptide chain release factor 1 directs the termination of translation in response to the peptide chain termination codons UAG and UAA.</text>
</comment>
<comment type="subcellular location">
    <subcellularLocation>
        <location evidence="1">Cytoplasm</location>
    </subcellularLocation>
</comment>
<comment type="PTM">
    <text evidence="1">Methylated by PrmC. Methylation increases the termination efficiency of RF1.</text>
</comment>
<comment type="similarity">
    <text evidence="1">Belongs to the prokaryotic/mitochondrial release factor family.</text>
</comment>
<proteinExistence type="inferred from homology"/>
<sequence>MKPSIVAKLEALHERHEEVQALLGDAGIIADQDRFRALSREYAQLSDVSRCFTDWQQVQDDIETAQMMLDDPEMREMAQEELREAKEKSEQLEQQLQVLLLPKDPDDERNAFLEVRAGTGGDEAALFAGDLFRMYSRYAEARRWRVEIMSMSEGEHGGYKEIIAKISGDGVYGRLKFESGGHRVQRVPATESQGRIHTSACTVAVMPELPEAELPDINPADLRIDTFRSSGAGGQHVNTTDSAIRITHLPTGIVVECQDERSQHKNKAKALSVLGARIHAAETAKRQQAEASTRRNLLGSGDRSDRNRTYNFPQGRVTDHRINLTLYRLDETMEGKLDMLIEPIVQEHQADLLAALSEQE</sequence>
<gene>
    <name evidence="1" type="primary">prfA</name>
    <name type="ordered locus">SeAg_B1363</name>
</gene>
<name>RF1_SALA4</name>